<dbReference type="EMBL" id="BX548175">
    <property type="protein sequence ID" value="CAE20878.1"/>
    <property type="molecule type" value="Genomic_DNA"/>
</dbReference>
<dbReference type="RefSeq" id="WP_011130081.1">
    <property type="nucleotide sequence ID" value="NC_005071.1"/>
</dbReference>
<dbReference type="SMR" id="Q7V7N7"/>
<dbReference type="KEGG" id="pmt:PMT_0703"/>
<dbReference type="eggNOG" id="COG0443">
    <property type="taxonomic scope" value="Bacteria"/>
</dbReference>
<dbReference type="HOGENOM" id="CLU_005965_2_1_3"/>
<dbReference type="OrthoDB" id="9766019at2"/>
<dbReference type="Proteomes" id="UP000001423">
    <property type="component" value="Chromosome"/>
</dbReference>
<dbReference type="GO" id="GO:0005524">
    <property type="term" value="F:ATP binding"/>
    <property type="evidence" value="ECO:0007669"/>
    <property type="project" value="UniProtKB-UniRule"/>
</dbReference>
<dbReference type="GO" id="GO:0140662">
    <property type="term" value="F:ATP-dependent protein folding chaperone"/>
    <property type="evidence" value="ECO:0007669"/>
    <property type="project" value="InterPro"/>
</dbReference>
<dbReference type="GO" id="GO:0051082">
    <property type="term" value="F:unfolded protein binding"/>
    <property type="evidence" value="ECO:0007669"/>
    <property type="project" value="InterPro"/>
</dbReference>
<dbReference type="CDD" id="cd10234">
    <property type="entry name" value="ASKHA_NBD_HSP70_DnaK-like"/>
    <property type="match status" value="1"/>
</dbReference>
<dbReference type="FunFam" id="2.60.34.10:FF:000014">
    <property type="entry name" value="Chaperone protein DnaK HSP70"/>
    <property type="match status" value="1"/>
</dbReference>
<dbReference type="FunFam" id="3.30.420.40:FF:000004">
    <property type="entry name" value="Molecular chaperone DnaK"/>
    <property type="match status" value="1"/>
</dbReference>
<dbReference type="FunFam" id="3.90.640.10:FF:000003">
    <property type="entry name" value="Molecular chaperone DnaK"/>
    <property type="match status" value="1"/>
</dbReference>
<dbReference type="Gene3D" id="3.30.420.40">
    <property type="match status" value="2"/>
</dbReference>
<dbReference type="Gene3D" id="3.90.640.10">
    <property type="entry name" value="Actin, Chain A, domain 4"/>
    <property type="match status" value="1"/>
</dbReference>
<dbReference type="Gene3D" id="2.60.34.10">
    <property type="entry name" value="Substrate Binding Domain Of DNAk, Chain A, domain 1"/>
    <property type="match status" value="1"/>
</dbReference>
<dbReference type="HAMAP" id="MF_00332">
    <property type="entry name" value="DnaK"/>
    <property type="match status" value="1"/>
</dbReference>
<dbReference type="InterPro" id="IPR043129">
    <property type="entry name" value="ATPase_NBD"/>
</dbReference>
<dbReference type="InterPro" id="IPR012725">
    <property type="entry name" value="Chaperone_DnaK"/>
</dbReference>
<dbReference type="InterPro" id="IPR018181">
    <property type="entry name" value="Heat_shock_70_CS"/>
</dbReference>
<dbReference type="InterPro" id="IPR029047">
    <property type="entry name" value="HSP70_peptide-bd_sf"/>
</dbReference>
<dbReference type="InterPro" id="IPR013126">
    <property type="entry name" value="Hsp_70_fam"/>
</dbReference>
<dbReference type="NCBIfam" id="NF001413">
    <property type="entry name" value="PRK00290.1"/>
    <property type="match status" value="1"/>
</dbReference>
<dbReference type="NCBIfam" id="NF009946">
    <property type="entry name" value="PRK13410.1"/>
    <property type="match status" value="1"/>
</dbReference>
<dbReference type="PANTHER" id="PTHR19375">
    <property type="entry name" value="HEAT SHOCK PROTEIN 70KDA"/>
    <property type="match status" value="1"/>
</dbReference>
<dbReference type="Pfam" id="PF00012">
    <property type="entry name" value="HSP70"/>
    <property type="match status" value="1"/>
</dbReference>
<dbReference type="PRINTS" id="PR00301">
    <property type="entry name" value="HEATSHOCK70"/>
</dbReference>
<dbReference type="SUPFAM" id="SSF53067">
    <property type="entry name" value="Actin-like ATPase domain"/>
    <property type="match status" value="2"/>
</dbReference>
<dbReference type="SUPFAM" id="SSF100920">
    <property type="entry name" value="Heat shock protein 70kD (HSP70), peptide-binding domain"/>
    <property type="match status" value="1"/>
</dbReference>
<dbReference type="PROSITE" id="PS00297">
    <property type="entry name" value="HSP70_1"/>
    <property type="match status" value="1"/>
</dbReference>
<dbReference type="PROSITE" id="PS00329">
    <property type="entry name" value="HSP70_2"/>
    <property type="match status" value="1"/>
</dbReference>
<dbReference type="PROSITE" id="PS01036">
    <property type="entry name" value="HSP70_3"/>
    <property type="match status" value="1"/>
</dbReference>
<reference key="1">
    <citation type="journal article" date="2003" name="Nature">
        <title>Genome divergence in two Prochlorococcus ecotypes reflects oceanic niche differentiation.</title>
        <authorList>
            <person name="Rocap G."/>
            <person name="Larimer F.W."/>
            <person name="Lamerdin J.E."/>
            <person name="Malfatti S."/>
            <person name="Chain P."/>
            <person name="Ahlgren N.A."/>
            <person name="Arellano A."/>
            <person name="Coleman M."/>
            <person name="Hauser L."/>
            <person name="Hess W.R."/>
            <person name="Johnson Z.I."/>
            <person name="Land M.L."/>
            <person name="Lindell D."/>
            <person name="Post A.F."/>
            <person name="Regala W."/>
            <person name="Shah M."/>
            <person name="Shaw S.L."/>
            <person name="Steglich C."/>
            <person name="Sullivan M.B."/>
            <person name="Ting C.S."/>
            <person name="Tolonen A."/>
            <person name="Webb E.A."/>
            <person name="Zinser E.R."/>
            <person name="Chisholm S.W."/>
        </authorList>
    </citation>
    <scope>NUCLEOTIDE SEQUENCE [LARGE SCALE GENOMIC DNA]</scope>
    <source>
        <strain>MIT 9313</strain>
    </source>
</reference>
<name>DNAK1_PROMM</name>
<organism>
    <name type="scientific">Prochlorococcus marinus (strain MIT 9313)</name>
    <dbReference type="NCBI Taxonomy" id="74547"/>
    <lineage>
        <taxon>Bacteria</taxon>
        <taxon>Bacillati</taxon>
        <taxon>Cyanobacteriota</taxon>
        <taxon>Cyanophyceae</taxon>
        <taxon>Synechococcales</taxon>
        <taxon>Prochlorococcaceae</taxon>
        <taxon>Prochlorococcus</taxon>
    </lineage>
</organism>
<proteinExistence type="inferred from homology"/>
<accession>Q7V7N7</accession>
<protein>
    <recommendedName>
        <fullName>Chaperone protein dnaK1</fullName>
    </recommendedName>
    <alternativeName>
        <fullName>HSP70-1</fullName>
    </alternativeName>
    <alternativeName>
        <fullName>Heat shock 70 kDa protein 1</fullName>
    </alternativeName>
    <alternativeName>
        <fullName>Heat shock protein 70-1</fullName>
    </alternativeName>
</protein>
<gene>
    <name type="primary">dnaK1</name>
    <name type="ordered locus">PMT_0703</name>
</gene>
<evidence type="ECO:0000250" key="1"/>
<evidence type="ECO:0000305" key="2"/>
<feature type="chain" id="PRO_0000078514" description="Chaperone protein dnaK1">
    <location>
        <begin position="1"/>
        <end position="664"/>
    </location>
</feature>
<feature type="modified residue" description="Phosphothreonine; by autocatalysis" evidence="1">
    <location>
        <position position="198"/>
    </location>
</feature>
<keyword id="KW-0067">ATP-binding</keyword>
<keyword id="KW-0143">Chaperone</keyword>
<keyword id="KW-0547">Nucleotide-binding</keyword>
<keyword id="KW-0597">Phosphoprotein</keyword>
<keyword id="KW-1185">Reference proteome</keyword>
<keyword id="KW-0346">Stress response</keyword>
<comment type="function">
    <text evidence="1">Acts as a chaperone.</text>
</comment>
<comment type="induction">
    <text evidence="1">By stress conditions e.g. heat shock (By similarity).</text>
</comment>
<comment type="similarity">
    <text evidence="2">Belongs to the heat shock protein 70 family.</text>
</comment>
<sequence length="664" mass="72549">MGRIVGIDLGTTNSVVAVLEAGRPQVIANAEGSRTTPSVVGYSKEAELLVGQLARRQLVLNPRNTFANLKRFVGRGWDEMDDSSLSVPYTVRANEQGNVRVSCQVTEREYAPEELVASIIRKLVDDAATYLGEPVEAAVVTVPAYFNDAQRQATRDAGRLAGITVERILNEPTAAALAYGFDRSAARRVLVFDLGGGTFDVSLMRVANGVFDVKATCGDTQLGGNDFDQRIVDWLAEAFKTKHGLDLRRDRQALQRLIEAAEKAKQELSGVLSTPISLPFIATGPDGPLHIETSLDRPTFEGLCPDLLDRLLNPVQTALRDSGWSADDVDDVVLVGGGTRMPMVQQLLRTLVASEPCQSVNPDEVVAVGGAVQAGILTGELRDLMLNDVTPLSLGLETVGGLMKVLIPRNTPIPVRQSDVFSTSEANQSSVEIHVWQGERQLAADNKSLGRFRLSGIPPAPRGVPQVQVAFDIDANGLLQVSATDRTTGRKQSVNIQGGSTLNEEELQALLAEAEAKAGEDRRRRASIDRRNSALTLVGQAERRLRDAALELGPYGAERQQRAVETAMRDVQDLLEQNDLQELELAVASLQEALFGLNRRISSERRTDANPLQGIRNTLGSLKDELFSDDDWDEDPWNSPARSSDGRRIYRGRELNPWDDDFYR</sequence>